<dbReference type="EMBL" id="CU928162">
    <property type="protein sequence ID" value="CAR06620.1"/>
    <property type="molecule type" value="Genomic_DNA"/>
</dbReference>
<dbReference type="RefSeq" id="WP_000158161.1">
    <property type="nucleotide sequence ID" value="NC_011745.1"/>
</dbReference>
<dbReference type="KEGG" id="ecq:ECED1_0410"/>
<dbReference type="HOGENOM" id="CLU_106619_2_1_6"/>
<dbReference type="Proteomes" id="UP000000748">
    <property type="component" value="Chromosome"/>
</dbReference>
<dbReference type="CDD" id="cd18720">
    <property type="entry name" value="PIN_YqxD-like"/>
    <property type="match status" value="1"/>
</dbReference>
<dbReference type="HAMAP" id="MF_00489">
    <property type="entry name" value="UPF0178"/>
    <property type="match status" value="1"/>
</dbReference>
<dbReference type="InterPro" id="IPR003791">
    <property type="entry name" value="UPF0178"/>
</dbReference>
<dbReference type="NCBIfam" id="NF001095">
    <property type="entry name" value="PRK00124.1"/>
    <property type="match status" value="1"/>
</dbReference>
<dbReference type="PANTHER" id="PTHR35146">
    <property type="entry name" value="UPF0178 PROTEIN YAII"/>
    <property type="match status" value="1"/>
</dbReference>
<dbReference type="PANTHER" id="PTHR35146:SF1">
    <property type="entry name" value="UPF0178 PROTEIN YAII"/>
    <property type="match status" value="1"/>
</dbReference>
<dbReference type="Pfam" id="PF02639">
    <property type="entry name" value="DUF188"/>
    <property type="match status" value="1"/>
</dbReference>
<proteinExistence type="inferred from homology"/>
<comment type="similarity">
    <text evidence="1">Belongs to the UPF0178 family.</text>
</comment>
<gene>
    <name evidence="1" type="primary">yaiI</name>
    <name type="ordered locus">ECED1_0410</name>
</gene>
<sequence>MTIWVDADACPNVIKEILYRAAERMQMPLVLVANQSLRVPPSRFIRTLRVAAGFDVADNEIVRQCEAGDLVITADIPLAAEAIEKGAAALNPRGERYTPATIRERLTMRDFMDTLRASGIQTGGPDSLSQRDRQAFAAELEKWWLKVQRSRG</sequence>
<reference key="1">
    <citation type="journal article" date="2009" name="PLoS Genet.">
        <title>Organised genome dynamics in the Escherichia coli species results in highly diverse adaptive paths.</title>
        <authorList>
            <person name="Touchon M."/>
            <person name="Hoede C."/>
            <person name="Tenaillon O."/>
            <person name="Barbe V."/>
            <person name="Baeriswyl S."/>
            <person name="Bidet P."/>
            <person name="Bingen E."/>
            <person name="Bonacorsi S."/>
            <person name="Bouchier C."/>
            <person name="Bouvet O."/>
            <person name="Calteau A."/>
            <person name="Chiapello H."/>
            <person name="Clermont O."/>
            <person name="Cruveiller S."/>
            <person name="Danchin A."/>
            <person name="Diard M."/>
            <person name="Dossat C."/>
            <person name="Karoui M.E."/>
            <person name="Frapy E."/>
            <person name="Garry L."/>
            <person name="Ghigo J.M."/>
            <person name="Gilles A.M."/>
            <person name="Johnson J."/>
            <person name="Le Bouguenec C."/>
            <person name="Lescat M."/>
            <person name="Mangenot S."/>
            <person name="Martinez-Jehanne V."/>
            <person name="Matic I."/>
            <person name="Nassif X."/>
            <person name="Oztas S."/>
            <person name="Petit M.A."/>
            <person name="Pichon C."/>
            <person name="Rouy Z."/>
            <person name="Ruf C.S."/>
            <person name="Schneider D."/>
            <person name="Tourret J."/>
            <person name="Vacherie B."/>
            <person name="Vallenet D."/>
            <person name="Medigue C."/>
            <person name="Rocha E.P.C."/>
            <person name="Denamur E."/>
        </authorList>
    </citation>
    <scope>NUCLEOTIDE SEQUENCE [LARGE SCALE GENOMIC DNA]</scope>
    <source>
        <strain>ED1a</strain>
    </source>
</reference>
<evidence type="ECO:0000255" key="1">
    <source>
        <dbReference type="HAMAP-Rule" id="MF_00489"/>
    </source>
</evidence>
<name>YAII_ECO81</name>
<feature type="chain" id="PRO_1000197833" description="UPF0178 protein YaiI">
    <location>
        <begin position="1"/>
        <end position="152"/>
    </location>
</feature>
<organism>
    <name type="scientific">Escherichia coli O81 (strain ED1a)</name>
    <dbReference type="NCBI Taxonomy" id="585397"/>
    <lineage>
        <taxon>Bacteria</taxon>
        <taxon>Pseudomonadati</taxon>
        <taxon>Pseudomonadota</taxon>
        <taxon>Gammaproteobacteria</taxon>
        <taxon>Enterobacterales</taxon>
        <taxon>Enterobacteriaceae</taxon>
        <taxon>Escherichia</taxon>
    </lineage>
</organism>
<accession>B7MPE8</accession>
<protein>
    <recommendedName>
        <fullName evidence="1">UPF0178 protein YaiI</fullName>
    </recommendedName>
</protein>